<reference key="1">
    <citation type="journal article" date="1997" name="J. Bacteriol.">
        <title>Complete genome sequence of Methanobacterium thermoautotrophicum deltaH: functional analysis and comparative genomics.</title>
        <authorList>
            <person name="Smith D.R."/>
            <person name="Doucette-Stamm L.A."/>
            <person name="Deloughery C."/>
            <person name="Lee H.-M."/>
            <person name="Dubois J."/>
            <person name="Aldredge T."/>
            <person name="Bashirzadeh R."/>
            <person name="Blakely D."/>
            <person name="Cook R."/>
            <person name="Gilbert K."/>
            <person name="Harrison D."/>
            <person name="Hoang L."/>
            <person name="Keagle P."/>
            <person name="Lumm W."/>
            <person name="Pothier B."/>
            <person name="Qiu D."/>
            <person name="Spadafora R."/>
            <person name="Vicare R."/>
            <person name="Wang Y."/>
            <person name="Wierzbowski J."/>
            <person name="Gibson R."/>
            <person name="Jiwani N."/>
            <person name="Caruso A."/>
            <person name="Bush D."/>
            <person name="Safer H."/>
            <person name="Patwell D."/>
            <person name="Prabhakar S."/>
            <person name="McDougall S."/>
            <person name="Shimer G."/>
            <person name="Goyal A."/>
            <person name="Pietrovski S."/>
            <person name="Church G.M."/>
            <person name="Daniels C.J."/>
            <person name="Mao J.-I."/>
            <person name="Rice P."/>
            <person name="Noelling J."/>
            <person name="Reeve J.N."/>
        </authorList>
    </citation>
    <scope>NUCLEOTIDE SEQUENCE [LARGE SCALE GENOMIC DNA]</scope>
    <source>
        <strain>ATCC 29096 / DSM 1053 / JCM 10044 / NBRC 100330 / Delta H</strain>
    </source>
</reference>
<reference key="2">
    <citation type="journal article" date="2003" name="Proteins">
        <title>Crystal structures of MTH1187 and its yeast ortholog YBL001c.</title>
        <authorList>
            <person name="Tao X."/>
            <person name="Khayat R."/>
            <person name="Christendat D."/>
            <person name="Savchenko A."/>
            <person name="Xu X."/>
            <person name="Goldsmith-Fischman S."/>
            <person name="Honig B."/>
            <person name="Edwards A."/>
            <person name="Arrowsmith C.H."/>
            <person name="Tong L."/>
        </authorList>
    </citation>
    <scope>X-RAY CRYSTALLOGRAPHY (2.3 ANGSTROMS)</scope>
</reference>
<sequence>MITAELTVIPLGTCSTSLSSYVAAAVEALKKLNVRYEISGMGTLLEAEDLDELMEAVKAAHEAVLQAGSDRVYTTLKIDDRRDADRGLRDKVESVKEKI</sequence>
<accession>O27255</accession>
<protein>
    <recommendedName>
        <fullName>UPF0045 protein MTH_1187</fullName>
    </recommendedName>
</protein>
<organism>
    <name type="scientific">Methanothermobacter thermautotrophicus (strain ATCC 29096 / DSM 1053 / JCM 10044 / NBRC 100330 / Delta H)</name>
    <name type="common">Methanobacterium thermoautotrophicum</name>
    <dbReference type="NCBI Taxonomy" id="187420"/>
    <lineage>
        <taxon>Archaea</taxon>
        <taxon>Methanobacteriati</taxon>
        <taxon>Methanobacteriota</taxon>
        <taxon>Methanomada group</taxon>
        <taxon>Methanobacteria</taxon>
        <taxon>Methanobacteriales</taxon>
        <taxon>Methanobacteriaceae</taxon>
        <taxon>Methanothermobacter</taxon>
    </lineage>
</organism>
<evidence type="ECO:0000305" key="1"/>
<evidence type="ECO:0007829" key="2">
    <source>
        <dbReference type="PDB" id="1LXN"/>
    </source>
</evidence>
<name>Y1187_METTH</name>
<proteinExistence type="evidence at protein level"/>
<comment type="subunit">
    <text>Homotetramer.</text>
</comment>
<comment type="similarity">
    <text evidence="1">Belongs to the UPF0045 family.</text>
</comment>
<keyword id="KW-0002">3D-structure</keyword>
<keyword id="KW-1185">Reference proteome</keyword>
<gene>
    <name type="ordered locus">MTH_1187</name>
</gene>
<feature type="chain" id="PRO_0000147629" description="UPF0045 protein MTH_1187">
    <location>
        <begin position="1"/>
        <end position="99"/>
    </location>
</feature>
<feature type="strand" evidence="2">
    <location>
        <begin position="2"/>
        <end position="12"/>
    </location>
</feature>
<feature type="strand" evidence="2">
    <location>
        <begin position="14"/>
        <end position="16"/>
    </location>
</feature>
<feature type="helix" evidence="2">
    <location>
        <begin position="19"/>
        <end position="29"/>
    </location>
</feature>
<feature type="strand" evidence="2">
    <location>
        <begin position="35"/>
        <end position="39"/>
    </location>
</feature>
<feature type="strand" evidence="2">
    <location>
        <begin position="42"/>
        <end position="49"/>
    </location>
</feature>
<feature type="helix" evidence="2">
    <location>
        <begin position="50"/>
        <end position="66"/>
    </location>
</feature>
<feature type="strand" evidence="2">
    <location>
        <begin position="70"/>
        <end position="84"/>
    </location>
</feature>
<feature type="helix" evidence="2">
    <location>
        <begin position="88"/>
        <end position="98"/>
    </location>
</feature>
<dbReference type="EMBL" id="AE000666">
    <property type="protein sequence ID" value="AAB85676.1"/>
    <property type="molecule type" value="Genomic_DNA"/>
</dbReference>
<dbReference type="PIR" id="C69025">
    <property type="entry name" value="C69025"/>
</dbReference>
<dbReference type="RefSeq" id="WP_010876811.1">
    <property type="nucleotide sequence ID" value="NC_000916.1"/>
</dbReference>
<dbReference type="PDB" id="1LXN">
    <property type="method" value="X-ray"/>
    <property type="resolution" value="2.30 A"/>
    <property type="chains" value="A/B/C/D=1-99"/>
</dbReference>
<dbReference type="PDBsum" id="1LXN"/>
<dbReference type="SMR" id="O27255"/>
<dbReference type="STRING" id="187420.MTH_1187"/>
<dbReference type="PaxDb" id="187420-MTH_1187"/>
<dbReference type="EnsemblBacteria" id="AAB85676">
    <property type="protein sequence ID" value="AAB85676"/>
    <property type="gene ID" value="MTH_1187"/>
</dbReference>
<dbReference type="KEGG" id="mth:MTH_1187"/>
<dbReference type="PATRIC" id="fig|187420.15.peg.1165"/>
<dbReference type="HOGENOM" id="CLU_137479_3_1_2"/>
<dbReference type="InParanoid" id="O27255"/>
<dbReference type="EvolutionaryTrace" id="O27255"/>
<dbReference type="Proteomes" id="UP000005223">
    <property type="component" value="Chromosome"/>
</dbReference>
<dbReference type="GO" id="GO:0005829">
    <property type="term" value="C:cytosol"/>
    <property type="evidence" value="ECO:0007669"/>
    <property type="project" value="TreeGrafter"/>
</dbReference>
<dbReference type="Gene3D" id="3.30.70.930">
    <property type="match status" value="1"/>
</dbReference>
<dbReference type="InterPro" id="IPR029756">
    <property type="entry name" value="MTH1187/YkoF-like"/>
</dbReference>
<dbReference type="InterPro" id="IPR002767">
    <property type="entry name" value="Thiamine_BP"/>
</dbReference>
<dbReference type="InterPro" id="IPR051614">
    <property type="entry name" value="UPF0045_domain"/>
</dbReference>
<dbReference type="NCBIfam" id="TIGR00106">
    <property type="entry name" value="MTH1187 family thiamine-binding protein"/>
    <property type="match status" value="1"/>
</dbReference>
<dbReference type="PANTHER" id="PTHR33777">
    <property type="entry name" value="UPF0045 PROTEIN ECM15"/>
    <property type="match status" value="1"/>
</dbReference>
<dbReference type="PANTHER" id="PTHR33777:SF1">
    <property type="entry name" value="UPF0045 PROTEIN ECM15"/>
    <property type="match status" value="1"/>
</dbReference>
<dbReference type="Pfam" id="PF01910">
    <property type="entry name" value="Thiamine_BP"/>
    <property type="match status" value="1"/>
</dbReference>
<dbReference type="SUPFAM" id="SSF89957">
    <property type="entry name" value="MTH1187/YkoF-like"/>
    <property type="match status" value="1"/>
</dbReference>